<comment type="similarity">
    <text evidence="3">Belongs to the short-chain dehydrogenases/reductases (SDR) family.</text>
</comment>
<feature type="chain" id="PRO_0000428315" description="Uncharacterized oxidoreductase MT0971">
    <location>
        <begin position="1"/>
        <end position="253"/>
    </location>
</feature>
<feature type="active site" description="Proton acceptor" evidence="2">
    <location>
        <position position="159"/>
    </location>
</feature>
<feature type="binding site" evidence="1">
    <location>
        <position position="145"/>
    </location>
    <ligand>
        <name>substrate</name>
    </ligand>
</feature>
<accession>P9WGR6</accession>
<accession>L0T7Z5</accession>
<accession>P71564</accession>
<gene>
    <name type="ordered locus">MT0971</name>
</gene>
<keyword id="KW-0560">Oxidoreductase</keyword>
<keyword id="KW-1185">Reference proteome</keyword>
<reference key="1">
    <citation type="journal article" date="2002" name="J. Bacteriol.">
        <title>Whole-genome comparison of Mycobacterium tuberculosis clinical and laboratory strains.</title>
        <authorList>
            <person name="Fleischmann R.D."/>
            <person name="Alland D."/>
            <person name="Eisen J.A."/>
            <person name="Carpenter L."/>
            <person name="White O."/>
            <person name="Peterson J.D."/>
            <person name="DeBoy R.T."/>
            <person name="Dodson R.J."/>
            <person name="Gwinn M.L."/>
            <person name="Haft D.H."/>
            <person name="Hickey E.K."/>
            <person name="Kolonay J.F."/>
            <person name="Nelson W.C."/>
            <person name="Umayam L.A."/>
            <person name="Ermolaeva M.D."/>
            <person name="Salzberg S.L."/>
            <person name="Delcher A."/>
            <person name="Utterback T.R."/>
            <person name="Weidman J.F."/>
            <person name="Khouri H.M."/>
            <person name="Gill J."/>
            <person name="Mikula A."/>
            <person name="Bishai W."/>
            <person name="Jacobs W.R. Jr."/>
            <person name="Venter J.C."/>
            <person name="Fraser C.M."/>
        </authorList>
    </citation>
    <scope>NUCLEOTIDE SEQUENCE [LARGE SCALE GENOMIC DNA]</scope>
    <source>
        <strain>CDC 1551 / Oshkosh</strain>
    </source>
</reference>
<name>Y945_MYCTO</name>
<evidence type="ECO:0000250" key="1"/>
<evidence type="ECO:0000255" key="2">
    <source>
        <dbReference type="PROSITE-ProRule" id="PRU10001"/>
    </source>
</evidence>
<evidence type="ECO:0000305" key="3"/>
<protein>
    <recommendedName>
        <fullName>Uncharacterized oxidoreductase MT0971</fullName>
        <ecNumber>1.-.-.-</ecNumber>
    </recommendedName>
</protein>
<sequence length="253" mass="27139">MLTGVTRQKILITGASSGLGAGMARSFAAQGRDLALCARRTDRLTELKAELSQRYPDIKIAVAELDVNDHERVPKVFAELSDEIGGIDRVIVNAGIGKGARLGSGKLWANKATIETNLVAALVQIETALDMFNQRGSGHLVLISSVLGVKGVPGVKAAYAASKAGVRSLGESLRAEYAQRPIRVTVLEPGYIESEMTAKSASTMLMVDNATGVKALVAAIEREPGRAAVPWWPWAPLVRLMWVLPPRLTRRFA</sequence>
<proteinExistence type="inferred from homology"/>
<dbReference type="EC" id="1.-.-.-"/>
<dbReference type="EMBL" id="AE000516">
    <property type="protein sequence ID" value="AAK45219.1"/>
    <property type="molecule type" value="Genomic_DNA"/>
</dbReference>
<dbReference type="PIR" id="G70715">
    <property type="entry name" value="G70715"/>
</dbReference>
<dbReference type="SMR" id="P9WGR6"/>
<dbReference type="KEGG" id="mtc:MT0971"/>
<dbReference type="PATRIC" id="fig|83331.31.peg.1042"/>
<dbReference type="HOGENOM" id="CLU_010194_2_1_11"/>
<dbReference type="Proteomes" id="UP000001020">
    <property type="component" value="Chromosome"/>
</dbReference>
<dbReference type="GO" id="GO:0016020">
    <property type="term" value="C:membrane"/>
    <property type="evidence" value="ECO:0007669"/>
    <property type="project" value="TreeGrafter"/>
</dbReference>
<dbReference type="GO" id="GO:0016491">
    <property type="term" value="F:oxidoreductase activity"/>
    <property type="evidence" value="ECO:0007669"/>
    <property type="project" value="UniProtKB-KW"/>
</dbReference>
<dbReference type="CDD" id="cd05350">
    <property type="entry name" value="SDR_c6"/>
    <property type="match status" value="1"/>
</dbReference>
<dbReference type="Gene3D" id="3.40.50.720">
    <property type="entry name" value="NAD(P)-binding Rossmann-like Domain"/>
    <property type="match status" value="1"/>
</dbReference>
<dbReference type="InterPro" id="IPR036291">
    <property type="entry name" value="NAD(P)-bd_dom_sf"/>
</dbReference>
<dbReference type="InterPro" id="IPR020904">
    <property type="entry name" value="Sc_DH/Rdtase_CS"/>
</dbReference>
<dbReference type="InterPro" id="IPR002347">
    <property type="entry name" value="SDR_fam"/>
</dbReference>
<dbReference type="NCBIfam" id="NF006099">
    <property type="entry name" value="PRK08251.1"/>
    <property type="match status" value="1"/>
</dbReference>
<dbReference type="PANTHER" id="PTHR44196">
    <property type="entry name" value="DEHYDROGENASE/REDUCTASE SDR FAMILY MEMBER 7B"/>
    <property type="match status" value="1"/>
</dbReference>
<dbReference type="PANTHER" id="PTHR44196:SF1">
    <property type="entry name" value="DEHYDROGENASE_REDUCTASE SDR FAMILY MEMBER 7B"/>
    <property type="match status" value="1"/>
</dbReference>
<dbReference type="Pfam" id="PF00106">
    <property type="entry name" value="adh_short"/>
    <property type="match status" value="1"/>
</dbReference>
<dbReference type="PRINTS" id="PR00081">
    <property type="entry name" value="GDHRDH"/>
</dbReference>
<dbReference type="PRINTS" id="PR00080">
    <property type="entry name" value="SDRFAMILY"/>
</dbReference>
<dbReference type="SUPFAM" id="SSF51735">
    <property type="entry name" value="NAD(P)-binding Rossmann-fold domains"/>
    <property type="match status" value="1"/>
</dbReference>
<dbReference type="PROSITE" id="PS00061">
    <property type="entry name" value="ADH_SHORT"/>
    <property type="match status" value="1"/>
</dbReference>
<organism>
    <name type="scientific">Mycobacterium tuberculosis (strain CDC 1551 / Oshkosh)</name>
    <dbReference type="NCBI Taxonomy" id="83331"/>
    <lineage>
        <taxon>Bacteria</taxon>
        <taxon>Bacillati</taxon>
        <taxon>Actinomycetota</taxon>
        <taxon>Actinomycetes</taxon>
        <taxon>Mycobacteriales</taxon>
        <taxon>Mycobacteriaceae</taxon>
        <taxon>Mycobacterium</taxon>
        <taxon>Mycobacterium tuberculosis complex</taxon>
    </lineage>
</organism>